<proteinExistence type="inferred from homology"/>
<reference key="1">
    <citation type="submission" date="2006-01" db="EMBL/GenBank/DDBJ databases">
        <title>Complete sequence of Rhodopseudomonas palustris HaA2.</title>
        <authorList>
            <consortium name="US DOE Joint Genome Institute"/>
            <person name="Copeland A."/>
            <person name="Lucas S."/>
            <person name="Lapidus A."/>
            <person name="Barry K."/>
            <person name="Detter J.C."/>
            <person name="Glavina T."/>
            <person name="Hammon N."/>
            <person name="Israni S."/>
            <person name="Pitluck S."/>
            <person name="Chain P."/>
            <person name="Malfatti S."/>
            <person name="Shin M."/>
            <person name="Vergez L."/>
            <person name="Schmutz J."/>
            <person name="Larimer F."/>
            <person name="Land M."/>
            <person name="Hauser L."/>
            <person name="Pelletier D.A."/>
            <person name="Kyrpides N."/>
            <person name="Anderson I."/>
            <person name="Oda Y."/>
            <person name="Harwood C.S."/>
            <person name="Richardson P."/>
        </authorList>
    </citation>
    <scope>NUCLEOTIDE SEQUENCE [LARGE SCALE GENOMIC DNA]</scope>
    <source>
        <strain>HaA2</strain>
    </source>
</reference>
<feature type="chain" id="PRO_0000252844" description="ATP-dependent Clp protease proteolytic subunit">
    <location>
        <begin position="1"/>
        <end position="212"/>
    </location>
</feature>
<feature type="active site" description="Nucleophile" evidence="1">
    <location>
        <position position="106"/>
    </location>
</feature>
<feature type="active site" evidence="1">
    <location>
        <position position="131"/>
    </location>
</feature>
<sequence length="212" mass="23540">MRDPVETYMNLVPMVVEQTNRGERAYDIFSRLLKERIIFLTGPVEDGMSTLVVAQLLFLEAENPKKEISMYINSPGGVVTSGLAIYDTMQFIRPPVSTLCTGQAASMGSLLLAAGHKDMRFSLPNARIMVHQPSGGFQGQATDIMLHAQEILNLKKRLNEIYVHHTGQTYKAIEDALERDKFLTADMARDFGIVDKVIDKRAEESAPGPKVA</sequence>
<protein>
    <recommendedName>
        <fullName evidence="1">ATP-dependent Clp protease proteolytic subunit</fullName>
        <ecNumber evidence="1">3.4.21.92</ecNumber>
    </recommendedName>
    <alternativeName>
        <fullName evidence="1">Endopeptidase Clp</fullName>
    </alternativeName>
</protein>
<evidence type="ECO:0000255" key="1">
    <source>
        <dbReference type="HAMAP-Rule" id="MF_00444"/>
    </source>
</evidence>
<accession>Q2IWZ4</accession>
<name>CLPP_RHOP2</name>
<keyword id="KW-0963">Cytoplasm</keyword>
<keyword id="KW-0378">Hydrolase</keyword>
<keyword id="KW-0645">Protease</keyword>
<keyword id="KW-1185">Reference proteome</keyword>
<keyword id="KW-0720">Serine protease</keyword>
<organism>
    <name type="scientific">Rhodopseudomonas palustris (strain HaA2)</name>
    <dbReference type="NCBI Taxonomy" id="316058"/>
    <lineage>
        <taxon>Bacteria</taxon>
        <taxon>Pseudomonadati</taxon>
        <taxon>Pseudomonadota</taxon>
        <taxon>Alphaproteobacteria</taxon>
        <taxon>Hyphomicrobiales</taxon>
        <taxon>Nitrobacteraceae</taxon>
        <taxon>Rhodopseudomonas</taxon>
    </lineage>
</organism>
<gene>
    <name evidence="1" type="primary">clpP</name>
    <name type="ordered locus">RPB_2563</name>
</gene>
<comment type="function">
    <text evidence="1">Cleaves peptides in various proteins in a process that requires ATP hydrolysis. Has a chymotrypsin-like activity. Plays a major role in the degradation of misfolded proteins.</text>
</comment>
<comment type="catalytic activity">
    <reaction evidence="1">
        <text>Hydrolysis of proteins to small peptides in the presence of ATP and magnesium. alpha-casein is the usual test substrate. In the absence of ATP, only oligopeptides shorter than five residues are hydrolyzed (such as succinyl-Leu-Tyr-|-NHMec, and Leu-Tyr-Leu-|-Tyr-Trp, in which cleavage of the -Tyr-|-Leu- and -Tyr-|-Trp bonds also occurs).</text>
        <dbReference type="EC" id="3.4.21.92"/>
    </reaction>
</comment>
<comment type="subunit">
    <text evidence="1">Fourteen ClpP subunits assemble into 2 heptameric rings which stack back to back to give a disk-like structure with a central cavity, resembling the structure of eukaryotic proteasomes.</text>
</comment>
<comment type="subcellular location">
    <subcellularLocation>
        <location evidence="1">Cytoplasm</location>
    </subcellularLocation>
</comment>
<comment type="similarity">
    <text evidence="1">Belongs to the peptidase S14 family.</text>
</comment>
<dbReference type="EC" id="3.4.21.92" evidence="1"/>
<dbReference type="EMBL" id="CP000250">
    <property type="protein sequence ID" value="ABD07266.1"/>
    <property type="molecule type" value="Genomic_DNA"/>
</dbReference>
<dbReference type="RefSeq" id="WP_011441451.1">
    <property type="nucleotide sequence ID" value="NC_007778.1"/>
</dbReference>
<dbReference type="SMR" id="Q2IWZ4"/>
<dbReference type="STRING" id="316058.RPB_2563"/>
<dbReference type="MEROPS" id="S14.001"/>
<dbReference type="KEGG" id="rpb:RPB_2563"/>
<dbReference type="eggNOG" id="COG0740">
    <property type="taxonomic scope" value="Bacteria"/>
</dbReference>
<dbReference type="HOGENOM" id="CLU_058707_3_0_5"/>
<dbReference type="OrthoDB" id="9802800at2"/>
<dbReference type="Proteomes" id="UP000008809">
    <property type="component" value="Chromosome"/>
</dbReference>
<dbReference type="GO" id="GO:0005737">
    <property type="term" value="C:cytoplasm"/>
    <property type="evidence" value="ECO:0007669"/>
    <property type="project" value="UniProtKB-SubCell"/>
</dbReference>
<dbReference type="GO" id="GO:0009368">
    <property type="term" value="C:endopeptidase Clp complex"/>
    <property type="evidence" value="ECO:0007669"/>
    <property type="project" value="TreeGrafter"/>
</dbReference>
<dbReference type="GO" id="GO:0004176">
    <property type="term" value="F:ATP-dependent peptidase activity"/>
    <property type="evidence" value="ECO:0007669"/>
    <property type="project" value="InterPro"/>
</dbReference>
<dbReference type="GO" id="GO:0051117">
    <property type="term" value="F:ATPase binding"/>
    <property type="evidence" value="ECO:0007669"/>
    <property type="project" value="TreeGrafter"/>
</dbReference>
<dbReference type="GO" id="GO:0004252">
    <property type="term" value="F:serine-type endopeptidase activity"/>
    <property type="evidence" value="ECO:0007669"/>
    <property type="project" value="UniProtKB-UniRule"/>
</dbReference>
<dbReference type="GO" id="GO:0006515">
    <property type="term" value="P:protein quality control for misfolded or incompletely synthesized proteins"/>
    <property type="evidence" value="ECO:0007669"/>
    <property type="project" value="TreeGrafter"/>
</dbReference>
<dbReference type="CDD" id="cd07017">
    <property type="entry name" value="S14_ClpP_2"/>
    <property type="match status" value="1"/>
</dbReference>
<dbReference type="FunFam" id="3.90.226.10:FF:000001">
    <property type="entry name" value="ATP-dependent Clp protease proteolytic subunit"/>
    <property type="match status" value="1"/>
</dbReference>
<dbReference type="Gene3D" id="3.90.226.10">
    <property type="entry name" value="2-enoyl-CoA Hydratase, Chain A, domain 1"/>
    <property type="match status" value="1"/>
</dbReference>
<dbReference type="HAMAP" id="MF_00444">
    <property type="entry name" value="ClpP"/>
    <property type="match status" value="1"/>
</dbReference>
<dbReference type="InterPro" id="IPR001907">
    <property type="entry name" value="ClpP"/>
</dbReference>
<dbReference type="InterPro" id="IPR029045">
    <property type="entry name" value="ClpP/crotonase-like_dom_sf"/>
</dbReference>
<dbReference type="InterPro" id="IPR023562">
    <property type="entry name" value="ClpP/TepA"/>
</dbReference>
<dbReference type="InterPro" id="IPR033135">
    <property type="entry name" value="ClpP_His_AS"/>
</dbReference>
<dbReference type="NCBIfam" id="NF001368">
    <property type="entry name" value="PRK00277.1"/>
    <property type="match status" value="1"/>
</dbReference>
<dbReference type="NCBIfam" id="NF009205">
    <property type="entry name" value="PRK12553.1"/>
    <property type="match status" value="1"/>
</dbReference>
<dbReference type="PANTHER" id="PTHR10381">
    <property type="entry name" value="ATP-DEPENDENT CLP PROTEASE PROTEOLYTIC SUBUNIT"/>
    <property type="match status" value="1"/>
</dbReference>
<dbReference type="PANTHER" id="PTHR10381:SF70">
    <property type="entry name" value="ATP-DEPENDENT CLP PROTEASE PROTEOLYTIC SUBUNIT"/>
    <property type="match status" value="1"/>
</dbReference>
<dbReference type="Pfam" id="PF00574">
    <property type="entry name" value="CLP_protease"/>
    <property type="match status" value="1"/>
</dbReference>
<dbReference type="PRINTS" id="PR00127">
    <property type="entry name" value="CLPPROTEASEP"/>
</dbReference>
<dbReference type="SUPFAM" id="SSF52096">
    <property type="entry name" value="ClpP/crotonase"/>
    <property type="match status" value="1"/>
</dbReference>
<dbReference type="PROSITE" id="PS00382">
    <property type="entry name" value="CLP_PROTEASE_HIS"/>
    <property type="match status" value="1"/>
</dbReference>